<proteinExistence type="inferred from homology"/>
<reference key="1">
    <citation type="journal article" date="2007" name="PLoS Genet.">
        <title>Meningococcal genetic variation mechanisms viewed through comparative analysis of serogroup C strain FAM18.</title>
        <authorList>
            <person name="Bentley S.D."/>
            <person name="Vernikos G.S."/>
            <person name="Snyder L.A.S."/>
            <person name="Churcher C."/>
            <person name="Arrowsmith C."/>
            <person name="Chillingworth T."/>
            <person name="Cronin A."/>
            <person name="Davis P.H."/>
            <person name="Holroyd N.E."/>
            <person name="Jagels K."/>
            <person name="Maddison M."/>
            <person name="Moule S."/>
            <person name="Rabbinowitsch E."/>
            <person name="Sharp S."/>
            <person name="Unwin L."/>
            <person name="Whitehead S."/>
            <person name="Quail M.A."/>
            <person name="Achtman M."/>
            <person name="Barrell B.G."/>
            <person name="Saunders N.J."/>
            <person name="Parkhill J."/>
        </authorList>
    </citation>
    <scope>NUCLEOTIDE SEQUENCE [LARGE SCALE GENOMIC DNA]</scope>
    <source>
        <strain>ATCC 700532 / DSM 15464 / FAM18</strain>
    </source>
</reference>
<comment type="catalytic activity">
    <reaction evidence="1">
        <text>tRNA(Gly) + glycine + ATP = glycyl-tRNA(Gly) + AMP + diphosphate</text>
        <dbReference type="Rhea" id="RHEA:16013"/>
        <dbReference type="Rhea" id="RHEA-COMP:9664"/>
        <dbReference type="Rhea" id="RHEA-COMP:9683"/>
        <dbReference type="ChEBI" id="CHEBI:30616"/>
        <dbReference type="ChEBI" id="CHEBI:33019"/>
        <dbReference type="ChEBI" id="CHEBI:57305"/>
        <dbReference type="ChEBI" id="CHEBI:78442"/>
        <dbReference type="ChEBI" id="CHEBI:78522"/>
        <dbReference type="ChEBI" id="CHEBI:456215"/>
        <dbReference type="EC" id="6.1.1.14"/>
    </reaction>
</comment>
<comment type="subunit">
    <text evidence="1">Tetramer of two alpha and two beta subunits.</text>
</comment>
<comment type="subcellular location">
    <subcellularLocation>
        <location evidence="1">Cytoplasm</location>
    </subcellularLocation>
</comment>
<comment type="similarity">
    <text evidence="1">Belongs to the class-II aminoacyl-tRNA synthetase family.</text>
</comment>
<dbReference type="EC" id="6.1.1.14" evidence="1"/>
<dbReference type="EMBL" id="AM421808">
    <property type="protein sequence ID" value="CAM11065.1"/>
    <property type="molecule type" value="Genomic_DNA"/>
</dbReference>
<dbReference type="RefSeq" id="WP_002248151.1">
    <property type="nucleotide sequence ID" value="NC_008767.1"/>
</dbReference>
<dbReference type="SMR" id="A1KW09"/>
<dbReference type="KEGG" id="nmc:NMC1904"/>
<dbReference type="HOGENOM" id="CLU_057066_1_0_4"/>
<dbReference type="Proteomes" id="UP000002286">
    <property type="component" value="Chromosome"/>
</dbReference>
<dbReference type="GO" id="GO:0005829">
    <property type="term" value="C:cytosol"/>
    <property type="evidence" value="ECO:0007669"/>
    <property type="project" value="TreeGrafter"/>
</dbReference>
<dbReference type="GO" id="GO:0005524">
    <property type="term" value="F:ATP binding"/>
    <property type="evidence" value="ECO:0007669"/>
    <property type="project" value="UniProtKB-UniRule"/>
</dbReference>
<dbReference type="GO" id="GO:0004820">
    <property type="term" value="F:glycine-tRNA ligase activity"/>
    <property type="evidence" value="ECO:0007669"/>
    <property type="project" value="UniProtKB-UniRule"/>
</dbReference>
<dbReference type="GO" id="GO:0006426">
    <property type="term" value="P:glycyl-tRNA aminoacylation"/>
    <property type="evidence" value="ECO:0007669"/>
    <property type="project" value="UniProtKB-UniRule"/>
</dbReference>
<dbReference type="CDD" id="cd00733">
    <property type="entry name" value="GlyRS_alpha_core"/>
    <property type="match status" value="1"/>
</dbReference>
<dbReference type="FunFam" id="3.30.930.10:FF:000006">
    <property type="entry name" value="Glycine--tRNA ligase alpha subunit"/>
    <property type="match status" value="1"/>
</dbReference>
<dbReference type="Gene3D" id="3.30.930.10">
    <property type="entry name" value="Bira Bifunctional Protein, Domain 2"/>
    <property type="match status" value="1"/>
</dbReference>
<dbReference type="Gene3D" id="1.20.58.180">
    <property type="entry name" value="Class II aaRS and biotin synthetases, domain 2"/>
    <property type="match status" value="1"/>
</dbReference>
<dbReference type="HAMAP" id="MF_00254">
    <property type="entry name" value="Gly_tRNA_synth_alpha"/>
    <property type="match status" value="1"/>
</dbReference>
<dbReference type="InterPro" id="IPR045864">
    <property type="entry name" value="aa-tRNA-synth_II/BPL/LPL"/>
</dbReference>
<dbReference type="InterPro" id="IPR006194">
    <property type="entry name" value="Gly-tRNA-synth_heterodimer"/>
</dbReference>
<dbReference type="InterPro" id="IPR002310">
    <property type="entry name" value="Gly-tRNA_ligase_asu"/>
</dbReference>
<dbReference type="NCBIfam" id="TIGR00388">
    <property type="entry name" value="glyQ"/>
    <property type="match status" value="1"/>
</dbReference>
<dbReference type="NCBIfam" id="NF006827">
    <property type="entry name" value="PRK09348.1"/>
    <property type="match status" value="1"/>
</dbReference>
<dbReference type="PANTHER" id="PTHR30075:SF2">
    <property type="entry name" value="GLYCINE--TRNA LIGASE, CHLOROPLASTIC_MITOCHONDRIAL 2"/>
    <property type="match status" value="1"/>
</dbReference>
<dbReference type="PANTHER" id="PTHR30075">
    <property type="entry name" value="GLYCYL-TRNA SYNTHETASE"/>
    <property type="match status" value="1"/>
</dbReference>
<dbReference type="Pfam" id="PF02091">
    <property type="entry name" value="tRNA-synt_2e"/>
    <property type="match status" value="1"/>
</dbReference>
<dbReference type="PRINTS" id="PR01044">
    <property type="entry name" value="TRNASYNTHGA"/>
</dbReference>
<dbReference type="SUPFAM" id="SSF55681">
    <property type="entry name" value="Class II aaRS and biotin synthetases"/>
    <property type="match status" value="1"/>
</dbReference>
<dbReference type="PROSITE" id="PS50861">
    <property type="entry name" value="AA_TRNA_LIGASE_II_GLYAB"/>
    <property type="match status" value="1"/>
</dbReference>
<evidence type="ECO:0000255" key="1">
    <source>
        <dbReference type="HAMAP-Rule" id="MF_00254"/>
    </source>
</evidence>
<gene>
    <name evidence="1" type="primary">glyQ</name>
    <name type="ordered locus">NMC1904</name>
</gene>
<organism>
    <name type="scientific">Neisseria meningitidis serogroup C / serotype 2a (strain ATCC 700532 / DSM 15464 / FAM18)</name>
    <dbReference type="NCBI Taxonomy" id="272831"/>
    <lineage>
        <taxon>Bacteria</taxon>
        <taxon>Pseudomonadati</taxon>
        <taxon>Pseudomonadota</taxon>
        <taxon>Betaproteobacteria</taxon>
        <taxon>Neisseriales</taxon>
        <taxon>Neisseriaceae</taxon>
        <taxon>Neisseria</taxon>
    </lineage>
</organism>
<name>SYGA_NEIMF</name>
<feature type="chain" id="PRO_1000047450" description="Glycine--tRNA ligase alpha subunit">
    <location>
        <begin position="1"/>
        <end position="298"/>
    </location>
</feature>
<protein>
    <recommendedName>
        <fullName evidence="1">Glycine--tRNA ligase alpha subunit</fullName>
        <ecNumber evidence="1">6.1.1.14</ecNumber>
    </recommendedName>
    <alternativeName>
        <fullName evidence="1">Glycyl-tRNA synthetase alpha subunit</fullName>
        <shortName evidence="1">GlyRS</shortName>
    </alternativeName>
</protein>
<keyword id="KW-0030">Aminoacyl-tRNA synthetase</keyword>
<keyword id="KW-0067">ATP-binding</keyword>
<keyword id="KW-0963">Cytoplasm</keyword>
<keyword id="KW-0436">Ligase</keyword>
<keyword id="KW-0547">Nucleotide-binding</keyword>
<keyword id="KW-0648">Protein biosynthesis</keyword>
<sequence>MLTFQQIIFKLQTFWADKGCTVIQSFDMEVGAGTSHPATCLRALGPEPWFAAYVQPSRRPKDGRYGDNPNRLQHYYQFQVALKPAPANIQDLYLDSLRELGIDPKVHDIRFVEDDWENPTLGAWGLGWEVWLNGMEVTQFTYFQQVGGIDCTPVLGEITYGIERLAMYLQGVENVYDLVWAKTLDGNTVTYGDVYHQNEVEQSTYNFEYSDADWLLRQFNDYEAQAKRLLAVEEASLALPAYELVLKAGHTFNLLDARGAISVTERATYIGRIRALSRAVAQKYVESREKLGFPLIKK</sequence>
<accession>A1KW09</accession>